<gene>
    <name evidence="1" type="primary">serC</name>
    <name type="ordered locus">HEAR2580</name>
</gene>
<protein>
    <recommendedName>
        <fullName evidence="1">Phosphoserine aminotransferase</fullName>
        <ecNumber evidence="1">2.6.1.52</ecNumber>
    </recommendedName>
    <alternativeName>
        <fullName evidence="1">Phosphohydroxythreonine aminotransferase</fullName>
        <shortName evidence="1">PSAT</shortName>
    </alternativeName>
</protein>
<dbReference type="EC" id="2.6.1.52" evidence="1"/>
<dbReference type="EMBL" id="CU207211">
    <property type="protein sequence ID" value="CAL62702.1"/>
    <property type="molecule type" value="Genomic_DNA"/>
</dbReference>
<dbReference type="SMR" id="A4G865"/>
<dbReference type="STRING" id="204773.HEAR2580"/>
<dbReference type="KEGG" id="har:HEAR2580"/>
<dbReference type="eggNOG" id="COG1932">
    <property type="taxonomic scope" value="Bacteria"/>
</dbReference>
<dbReference type="HOGENOM" id="CLU_034866_0_2_4"/>
<dbReference type="OrthoDB" id="9809412at2"/>
<dbReference type="UniPathway" id="UPA00135">
    <property type="reaction ID" value="UER00197"/>
</dbReference>
<dbReference type="UniPathway" id="UPA00244">
    <property type="reaction ID" value="UER00311"/>
</dbReference>
<dbReference type="Proteomes" id="UP000006697">
    <property type="component" value="Chromosome"/>
</dbReference>
<dbReference type="GO" id="GO:0005737">
    <property type="term" value="C:cytoplasm"/>
    <property type="evidence" value="ECO:0007669"/>
    <property type="project" value="UniProtKB-SubCell"/>
</dbReference>
<dbReference type="GO" id="GO:0004648">
    <property type="term" value="F:O-phospho-L-serine:2-oxoglutarate aminotransferase activity"/>
    <property type="evidence" value="ECO:0007669"/>
    <property type="project" value="UniProtKB-UniRule"/>
</dbReference>
<dbReference type="GO" id="GO:0030170">
    <property type="term" value="F:pyridoxal phosphate binding"/>
    <property type="evidence" value="ECO:0007669"/>
    <property type="project" value="UniProtKB-UniRule"/>
</dbReference>
<dbReference type="GO" id="GO:0006564">
    <property type="term" value="P:L-serine biosynthetic process"/>
    <property type="evidence" value="ECO:0007669"/>
    <property type="project" value="UniProtKB-UniRule"/>
</dbReference>
<dbReference type="GO" id="GO:0008615">
    <property type="term" value="P:pyridoxine biosynthetic process"/>
    <property type="evidence" value="ECO:0007669"/>
    <property type="project" value="UniProtKB-UniRule"/>
</dbReference>
<dbReference type="CDD" id="cd00611">
    <property type="entry name" value="PSAT_like"/>
    <property type="match status" value="1"/>
</dbReference>
<dbReference type="FunFam" id="3.40.640.10:FF:000010">
    <property type="entry name" value="Phosphoserine aminotransferase"/>
    <property type="match status" value="1"/>
</dbReference>
<dbReference type="FunFam" id="3.90.1150.10:FF:000006">
    <property type="entry name" value="Phosphoserine aminotransferase"/>
    <property type="match status" value="1"/>
</dbReference>
<dbReference type="Gene3D" id="3.90.1150.10">
    <property type="entry name" value="Aspartate Aminotransferase, domain 1"/>
    <property type="match status" value="1"/>
</dbReference>
<dbReference type="Gene3D" id="3.40.640.10">
    <property type="entry name" value="Type I PLP-dependent aspartate aminotransferase-like (Major domain)"/>
    <property type="match status" value="1"/>
</dbReference>
<dbReference type="HAMAP" id="MF_00160">
    <property type="entry name" value="SerC_aminotrans_5"/>
    <property type="match status" value="1"/>
</dbReference>
<dbReference type="InterPro" id="IPR000192">
    <property type="entry name" value="Aminotrans_V_dom"/>
</dbReference>
<dbReference type="InterPro" id="IPR022278">
    <property type="entry name" value="Pser_aminoTfrase"/>
</dbReference>
<dbReference type="InterPro" id="IPR015424">
    <property type="entry name" value="PyrdxlP-dep_Trfase"/>
</dbReference>
<dbReference type="InterPro" id="IPR015421">
    <property type="entry name" value="PyrdxlP-dep_Trfase_major"/>
</dbReference>
<dbReference type="InterPro" id="IPR015422">
    <property type="entry name" value="PyrdxlP-dep_Trfase_small"/>
</dbReference>
<dbReference type="NCBIfam" id="NF003764">
    <property type="entry name" value="PRK05355.1"/>
    <property type="match status" value="1"/>
</dbReference>
<dbReference type="NCBIfam" id="TIGR01364">
    <property type="entry name" value="serC_1"/>
    <property type="match status" value="1"/>
</dbReference>
<dbReference type="PANTHER" id="PTHR43247">
    <property type="entry name" value="PHOSPHOSERINE AMINOTRANSFERASE"/>
    <property type="match status" value="1"/>
</dbReference>
<dbReference type="PANTHER" id="PTHR43247:SF1">
    <property type="entry name" value="PHOSPHOSERINE AMINOTRANSFERASE"/>
    <property type="match status" value="1"/>
</dbReference>
<dbReference type="Pfam" id="PF00266">
    <property type="entry name" value="Aminotran_5"/>
    <property type="match status" value="1"/>
</dbReference>
<dbReference type="PIRSF" id="PIRSF000525">
    <property type="entry name" value="SerC"/>
    <property type="match status" value="1"/>
</dbReference>
<dbReference type="SUPFAM" id="SSF53383">
    <property type="entry name" value="PLP-dependent transferases"/>
    <property type="match status" value="1"/>
</dbReference>
<sequence length="363" mass="40067">MKRVFNFSPGPAAIPQEVIQQAADEMANWRGCGLSVMEMSHRGREFTEILATTKDDLRSLMSIPDNYKILLMQGGAIAENAIVPMNLVGMKPQPATIDFVNTGHWSIKSIEEARKYANVNVAASSEDQNFTYVPARDTWKLTPDAAYVHVCTNETIGGVEFDFTPDVGNVPLVADMSSNILSREIDVSRYAVIYAGAQKNIGPAGLTIVIVRDDMLGHALPICPSAFDWKLVAEHDSMFNTPPTYPIYIAGLTFQWMKRQGGVAAMEKVNIAKAKLLYDYLDSTDFYVNNVPAANRSRMNVPFFLRDASLNTKFLTEAGQNDLVQLKGHSSVGGMRASIYNAMPIEGVQALVDFMKAFEKKYG</sequence>
<organism>
    <name type="scientific">Herminiimonas arsenicoxydans</name>
    <dbReference type="NCBI Taxonomy" id="204773"/>
    <lineage>
        <taxon>Bacteria</taxon>
        <taxon>Pseudomonadati</taxon>
        <taxon>Pseudomonadota</taxon>
        <taxon>Betaproteobacteria</taxon>
        <taxon>Burkholderiales</taxon>
        <taxon>Oxalobacteraceae</taxon>
        <taxon>Herminiimonas</taxon>
    </lineage>
</organism>
<proteinExistence type="inferred from homology"/>
<accession>A4G865</accession>
<reference key="1">
    <citation type="journal article" date="2007" name="PLoS Genet.">
        <title>A tale of two oxidation states: bacterial colonization of arsenic-rich environments.</title>
        <authorList>
            <person name="Muller D."/>
            <person name="Medigue C."/>
            <person name="Koechler S."/>
            <person name="Barbe V."/>
            <person name="Barakat M."/>
            <person name="Talla E."/>
            <person name="Bonnefoy V."/>
            <person name="Krin E."/>
            <person name="Arsene-Ploetze F."/>
            <person name="Carapito C."/>
            <person name="Chandler M."/>
            <person name="Cournoyer B."/>
            <person name="Cruveiller S."/>
            <person name="Dossat C."/>
            <person name="Duval S."/>
            <person name="Heymann M."/>
            <person name="Leize E."/>
            <person name="Lieutaud A."/>
            <person name="Lievremont D."/>
            <person name="Makita Y."/>
            <person name="Mangenot S."/>
            <person name="Nitschke W."/>
            <person name="Ortet P."/>
            <person name="Perdrial N."/>
            <person name="Schoepp B."/>
            <person name="Siguier P."/>
            <person name="Simeonova D.D."/>
            <person name="Rouy Z."/>
            <person name="Segurens B."/>
            <person name="Turlin E."/>
            <person name="Vallenet D."/>
            <person name="van Dorsselaer A."/>
            <person name="Weiss S."/>
            <person name="Weissenbach J."/>
            <person name="Lett M.-C."/>
            <person name="Danchin A."/>
            <person name="Bertin P.N."/>
        </authorList>
    </citation>
    <scope>NUCLEOTIDE SEQUENCE [LARGE SCALE GENOMIC DNA]</scope>
    <source>
        <strain>ULPAs1</strain>
    </source>
</reference>
<evidence type="ECO:0000255" key="1">
    <source>
        <dbReference type="HAMAP-Rule" id="MF_00160"/>
    </source>
</evidence>
<keyword id="KW-0028">Amino-acid biosynthesis</keyword>
<keyword id="KW-0032">Aminotransferase</keyword>
<keyword id="KW-0963">Cytoplasm</keyword>
<keyword id="KW-0663">Pyridoxal phosphate</keyword>
<keyword id="KW-0664">Pyridoxine biosynthesis</keyword>
<keyword id="KW-1185">Reference proteome</keyword>
<keyword id="KW-0718">Serine biosynthesis</keyword>
<keyword id="KW-0808">Transferase</keyword>
<comment type="function">
    <text evidence="1">Catalyzes the reversible conversion of 3-phosphohydroxypyruvate to phosphoserine and of 3-hydroxy-2-oxo-4-phosphonooxybutanoate to phosphohydroxythreonine.</text>
</comment>
<comment type="catalytic activity">
    <reaction evidence="1">
        <text>O-phospho-L-serine + 2-oxoglutarate = 3-phosphooxypyruvate + L-glutamate</text>
        <dbReference type="Rhea" id="RHEA:14329"/>
        <dbReference type="ChEBI" id="CHEBI:16810"/>
        <dbReference type="ChEBI" id="CHEBI:18110"/>
        <dbReference type="ChEBI" id="CHEBI:29985"/>
        <dbReference type="ChEBI" id="CHEBI:57524"/>
        <dbReference type="EC" id="2.6.1.52"/>
    </reaction>
</comment>
<comment type="catalytic activity">
    <reaction evidence="1">
        <text>4-(phosphooxy)-L-threonine + 2-oxoglutarate = (R)-3-hydroxy-2-oxo-4-phosphooxybutanoate + L-glutamate</text>
        <dbReference type="Rhea" id="RHEA:16573"/>
        <dbReference type="ChEBI" id="CHEBI:16810"/>
        <dbReference type="ChEBI" id="CHEBI:29985"/>
        <dbReference type="ChEBI" id="CHEBI:58452"/>
        <dbReference type="ChEBI" id="CHEBI:58538"/>
        <dbReference type="EC" id="2.6.1.52"/>
    </reaction>
</comment>
<comment type="cofactor">
    <cofactor evidence="1">
        <name>pyridoxal 5'-phosphate</name>
        <dbReference type="ChEBI" id="CHEBI:597326"/>
    </cofactor>
    <text evidence="1">Binds 1 pyridoxal phosphate per subunit.</text>
</comment>
<comment type="pathway">
    <text evidence="1">Amino-acid biosynthesis; L-serine biosynthesis; L-serine from 3-phospho-D-glycerate: step 2/3.</text>
</comment>
<comment type="pathway">
    <text evidence="1">Cofactor biosynthesis; pyridoxine 5'-phosphate biosynthesis; pyridoxine 5'-phosphate from D-erythrose 4-phosphate: step 3/5.</text>
</comment>
<comment type="subunit">
    <text evidence="1">Homodimer.</text>
</comment>
<comment type="subcellular location">
    <subcellularLocation>
        <location evidence="1">Cytoplasm</location>
    </subcellularLocation>
</comment>
<comment type="similarity">
    <text evidence="1">Belongs to the class-V pyridoxal-phosphate-dependent aminotransferase family. SerC subfamily.</text>
</comment>
<feature type="chain" id="PRO_1000118179" description="Phosphoserine aminotransferase">
    <location>
        <begin position="1"/>
        <end position="363"/>
    </location>
</feature>
<feature type="binding site" evidence="1">
    <location>
        <position position="42"/>
    </location>
    <ligand>
        <name>L-glutamate</name>
        <dbReference type="ChEBI" id="CHEBI:29985"/>
    </ligand>
</feature>
<feature type="binding site" evidence="1">
    <location>
        <position position="105"/>
    </location>
    <ligand>
        <name>pyridoxal 5'-phosphate</name>
        <dbReference type="ChEBI" id="CHEBI:597326"/>
    </ligand>
</feature>
<feature type="binding site" evidence="1">
    <location>
        <position position="155"/>
    </location>
    <ligand>
        <name>pyridoxal 5'-phosphate</name>
        <dbReference type="ChEBI" id="CHEBI:597326"/>
    </ligand>
</feature>
<feature type="binding site" evidence="1">
    <location>
        <position position="175"/>
    </location>
    <ligand>
        <name>pyridoxal 5'-phosphate</name>
        <dbReference type="ChEBI" id="CHEBI:597326"/>
    </ligand>
</feature>
<feature type="binding site" evidence="1">
    <location>
        <position position="198"/>
    </location>
    <ligand>
        <name>pyridoxal 5'-phosphate</name>
        <dbReference type="ChEBI" id="CHEBI:597326"/>
    </ligand>
</feature>
<feature type="binding site" evidence="1">
    <location>
        <begin position="240"/>
        <end position="241"/>
    </location>
    <ligand>
        <name>pyridoxal 5'-phosphate</name>
        <dbReference type="ChEBI" id="CHEBI:597326"/>
    </ligand>
</feature>
<feature type="modified residue" description="N6-(pyridoxal phosphate)lysine" evidence="1">
    <location>
        <position position="199"/>
    </location>
</feature>
<name>SERC_HERAR</name>